<comment type="subcellular location">
    <subcellularLocation>
        <location evidence="4">Membrane</location>
        <topology evidence="4">Single-pass membrane protein</topology>
    </subcellularLocation>
</comment>
<gene>
    <name type="primary">lysmd4</name>
    <name type="ORF">si:dkey-111m11.2</name>
    <name type="ORF">si:dkeyp-82d11.1</name>
    <name type="ORF">zgc:77861</name>
</gene>
<name>LYSM4_DANRE</name>
<dbReference type="EMBL" id="BX649426">
    <property type="protein sequence ID" value="CAP09282.1"/>
    <property type="molecule type" value="Genomic_DNA"/>
</dbReference>
<dbReference type="EMBL" id="CR925803">
    <property type="protein sequence ID" value="CAN88102.2"/>
    <property type="molecule type" value="Genomic_DNA"/>
</dbReference>
<dbReference type="EMBL" id="CU570785">
    <property type="protein sequence ID" value="CAN88102.2"/>
    <property type="status" value="JOINED"/>
    <property type="molecule type" value="Genomic_DNA"/>
</dbReference>
<dbReference type="EMBL" id="CU570785">
    <property type="protein sequence ID" value="CAX12642.1"/>
    <property type="molecule type" value="Genomic_DNA"/>
</dbReference>
<dbReference type="EMBL" id="CR925803">
    <property type="protein sequence ID" value="CAX12642.1"/>
    <property type="status" value="JOINED"/>
    <property type="molecule type" value="Genomic_DNA"/>
</dbReference>
<dbReference type="EMBL" id="BC062528">
    <property type="protein sequence ID" value="AAH62528.1"/>
    <property type="molecule type" value="mRNA"/>
</dbReference>
<dbReference type="RefSeq" id="NP_957144.2">
    <property type="nucleotide sequence ID" value="NM_200850.2"/>
</dbReference>
<dbReference type="SMR" id="Q6P606"/>
<dbReference type="FunCoup" id="Q6P606">
    <property type="interactions" value="1003"/>
</dbReference>
<dbReference type="STRING" id="7955.ENSDARP00000090237"/>
<dbReference type="GlyCosmos" id="Q6P606">
    <property type="glycosylation" value="1 site, No reported glycans"/>
</dbReference>
<dbReference type="PaxDb" id="7955-ENSDARP00000090237"/>
<dbReference type="Ensembl" id="ENSDART00000099463">
    <property type="protein sequence ID" value="ENSDARP00000090237"/>
    <property type="gene ID" value="ENSDARG00000068702"/>
</dbReference>
<dbReference type="GeneID" id="100149102"/>
<dbReference type="KEGG" id="dre:100149102"/>
<dbReference type="AGR" id="ZFIN:ZDB-GENE-040426-1895"/>
<dbReference type="CTD" id="145748"/>
<dbReference type="ZFIN" id="ZDB-GENE-040426-1895">
    <property type="gene designation" value="lysmd4"/>
</dbReference>
<dbReference type="eggNOG" id="KOG2850">
    <property type="taxonomic scope" value="Eukaryota"/>
</dbReference>
<dbReference type="HOGENOM" id="CLU_070676_1_0_1"/>
<dbReference type="InParanoid" id="Q6P606"/>
<dbReference type="OMA" id="NDFSCNG"/>
<dbReference type="OrthoDB" id="538216at2759"/>
<dbReference type="PhylomeDB" id="Q6P606"/>
<dbReference type="TreeFam" id="TF326271"/>
<dbReference type="PRO" id="PR:Q6P606"/>
<dbReference type="Proteomes" id="UP000000437">
    <property type="component" value="Alternate scaffold 18"/>
</dbReference>
<dbReference type="Proteomes" id="UP000000437">
    <property type="component" value="Chromosome 18"/>
</dbReference>
<dbReference type="Bgee" id="ENSDARG00000068702">
    <property type="expression patterns" value="Expressed in muscle tissue and 19 other cell types or tissues"/>
</dbReference>
<dbReference type="GO" id="GO:0016020">
    <property type="term" value="C:membrane"/>
    <property type="evidence" value="ECO:0007669"/>
    <property type="project" value="UniProtKB-SubCell"/>
</dbReference>
<dbReference type="CDD" id="cd00118">
    <property type="entry name" value="LysM"/>
    <property type="match status" value="1"/>
</dbReference>
<dbReference type="Gene3D" id="3.10.350.10">
    <property type="entry name" value="LysM domain"/>
    <property type="match status" value="1"/>
</dbReference>
<dbReference type="InterPro" id="IPR045030">
    <property type="entry name" value="LYSM1-4"/>
</dbReference>
<dbReference type="InterPro" id="IPR018392">
    <property type="entry name" value="LysM_dom"/>
</dbReference>
<dbReference type="InterPro" id="IPR036779">
    <property type="entry name" value="LysM_dom_sf"/>
</dbReference>
<dbReference type="PANTHER" id="PTHR20932:SF7">
    <property type="entry name" value="AND PUTATIVE PEPTIDOGLYCAN-BINDING DOMAIN-CONTAINING PROTEIN 4-RELATED"/>
    <property type="match status" value="1"/>
</dbReference>
<dbReference type="PANTHER" id="PTHR20932">
    <property type="entry name" value="LYSM AND PUTATIVE PEPTIDOGLYCAN-BINDING DOMAIN-CONTAINING PROTEIN"/>
    <property type="match status" value="1"/>
</dbReference>
<dbReference type="PROSITE" id="PS51782">
    <property type="entry name" value="LYSM"/>
    <property type="match status" value="1"/>
</dbReference>
<accession>Q6P606</accession>
<accession>A5WV08</accession>
<accession>A8E7R1</accession>
<keyword id="KW-0325">Glycoprotein</keyword>
<keyword id="KW-0472">Membrane</keyword>
<keyword id="KW-1185">Reference proteome</keyword>
<keyword id="KW-0812">Transmembrane</keyword>
<keyword id="KW-1133">Transmembrane helix</keyword>
<feature type="chain" id="PRO_0000248016" description="LysM and putative peptidoglycan-binding domain-containing protein 4">
    <location>
        <begin position="1"/>
        <end position="267"/>
    </location>
</feature>
<feature type="topological domain" description="Extracellular" evidence="1">
    <location>
        <begin position="1"/>
        <end position="211"/>
    </location>
</feature>
<feature type="transmembrane region" description="Helical" evidence="1">
    <location>
        <begin position="212"/>
        <end position="232"/>
    </location>
</feature>
<feature type="topological domain" description="Cytoplasmic" evidence="1">
    <location>
        <begin position="233"/>
        <end position="267"/>
    </location>
</feature>
<feature type="domain" description="LysM" evidence="2">
    <location>
        <begin position="70"/>
        <end position="114"/>
    </location>
</feature>
<feature type="region of interest" description="Disordered" evidence="3">
    <location>
        <begin position="30"/>
        <end position="64"/>
    </location>
</feature>
<feature type="region of interest" description="Disordered" evidence="3">
    <location>
        <begin position="130"/>
        <end position="152"/>
    </location>
</feature>
<feature type="compositionally biased region" description="Acidic residues" evidence="3">
    <location>
        <begin position="35"/>
        <end position="45"/>
    </location>
</feature>
<feature type="compositionally biased region" description="Basic and acidic residues" evidence="3">
    <location>
        <begin position="49"/>
        <end position="64"/>
    </location>
</feature>
<feature type="compositionally biased region" description="Polar residues" evidence="3">
    <location>
        <begin position="142"/>
        <end position="152"/>
    </location>
</feature>
<feature type="glycosylation site" description="N-linked (GlcNAc...) asparagine" evidence="1">
    <location>
        <position position="79"/>
    </location>
</feature>
<feature type="sequence conflict" description="In Ref. 1; CAP09282 and 2; AAH62528." evidence="4" ref="1 2">
    <original>P</original>
    <variation>L</variation>
    <location>
        <position position="7"/>
    </location>
</feature>
<feature type="sequence conflict" description="In Ref. 2; AAH62528." evidence="4" ref="2">
    <original>A</original>
    <variation>T</variation>
    <location>
        <position position="146"/>
    </location>
</feature>
<feature type="sequence conflict" description="In Ref. 2; AAH62528." evidence="4" ref="2">
    <original>V</original>
    <variation>L</variation>
    <location>
        <position position="183"/>
    </location>
</feature>
<reference key="1">
    <citation type="journal article" date="2013" name="Nature">
        <title>The zebrafish reference genome sequence and its relationship to the human genome.</title>
        <authorList>
            <person name="Howe K."/>
            <person name="Clark M.D."/>
            <person name="Torroja C.F."/>
            <person name="Torrance J."/>
            <person name="Berthelot C."/>
            <person name="Muffato M."/>
            <person name="Collins J.E."/>
            <person name="Humphray S."/>
            <person name="McLaren K."/>
            <person name="Matthews L."/>
            <person name="McLaren S."/>
            <person name="Sealy I."/>
            <person name="Caccamo M."/>
            <person name="Churcher C."/>
            <person name="Scott C."/>
            <person name="Barrett J.C."/>
            <person name="Koch R."/>
            <person name="Rauch G.J."/>
            <person name="White S."/>
            <person name="Chow W."/>
            <person name="Kilian B."/>
            <person name="Quintais L.T."/>
            <person name="Guerra-Assuncao J.A."/>
            <person name="Zhou Y."/>
            <person name="Gu Y."/>
            <person name="Yen J."/>
            <person name="Vogel J.H."/>
            <person name="Eyre T."/>
            <person name="Redmond S."/>
            <person name="Banerjee R."/>
            <person name="Chi J."/>
            <person name="Fu B."/>
            <person name="Langley E."/>
            <person name="Maguire S.F."/>
            <person name="Laird G.K."/>
            <person name="Lloyd D."/>
            <person name="Kenyon E."/>
            <person name="Donaldson S."/>
            <person name="Sehra H."/>
            <person name="Almeida-King J."/>
            <person name="Loveland J."/>
            <person name="Trevanion S."/>
            <person name="Jones M."/>
            <person name="Quail M."/>
            <person name="Willey D."/>
            <person name="Hunt A."/>
            <person name="Burton J."/>
            <person name="Sims S."/>
            <person name="McLay K."/>
            <person name="Plumb B."/>
            <person name="Davis J."/>
            <person name="Clee C."/>
            <person name="Oliver K."/>
            <person name="Clark R."/>
            <person name="Riddle C."/>
            <person name="Elliot D."/>
            <person name="Threadgold G."/>
            <person name="Harden G."/>
            <person name="Ware D."/>
            <person name="Begum S."/>
            <person name="Mortimore B."/>
            <person name="Kerry G."/>
            <person name="Heath P."/>
            <person name="Phillimore B."/>
            <person name="Tracey A."/>
            <person name="Corby N."/>
            <person name="Dunn M."/>
            <person name="Johnson C."/>
            <person name="Wood J."/>
            <person name="Clark S."/>
            <person name="Pelan S."/>
            <person name="Griffiths G."/>
            <person name="Smith M."/>
            <person name="Glithero R."/>
            <person name="Howden P."/>
            <person name="Barker N."/>
            <person name="Lloyd C."/>
            <person name="Stevens C."/>
            <person name="Harley J."/>
            <person name="Holt K."/>
            <person name="Panagiotidis G."/>
            <person name="Lovell J."/>
            <person name="Beasley H."/>
            <person name="Henderson C."/>
            <person name="Gordon D."/>
            <person name="Auger K."/>
            <person name="Wright D."/>
            <person name="Collins J."/>
            <person name="Raisen C."/>
            <person name="Dyer L."/>
            <person name="Leung K."/>
            <person name="Robertson L."/>
            <person name="Ambridge K."/>
            <person name="Leongamornlert D."/>
            <person name="McGuire S."/>
            <person name="Gilderthorp R."/>
            <person name="Griffiths C."/>
            <person name="Manthravadi D."/>
            <person name="Nichol S."/>
            <person name="Barker G."/>
            <person name="Whitehead S."/>
            <person name="Kay M."/>
            <person name="Brown J."/>
            <person name="Murnane C."/>
            <person name="Gray E."/>
            <person name="Humphries M."/>
            <person name="Sycamore N."/>
            <person name="Barker D."/>
            <person name="Saunders D."/>
            <person name="Wallis J."/>
            <person name="Babbage A."/>
            <person name="Hammond S."/>
            <person name="Mashreghi-Mohammadi M."/>
            <person name="Barr L."/>
            <person name="Martin S."/>
            <person name="Wray P."/>
            <person name="Ellington A."/>
            <person name="Matthews N."/>
            <person name="Ellwood M."/>
            <person name="Woodmansey R."/>
            <person name="Clark G."/>
            <person name="Cooper J."/>
            <person name="Tromans A."/>
            <person name="Grafham D."/>
            <person name="Skuce C."/>
            <person name="Pandian R."/>
            <person name="Andrews R."/>
            <person name="Harrison E."/>
            <person name="Kimberley A."/>
            <person name="Garnett J."/>
            <person name="Fosker N."/>
            <person name="Hall R."/>
            <person name="Garner P."/>
            <person name="Kelly D."/>
            <person name="Bird C."/>
            <person name="Palmer S."/>
            <person name="Gehring I."/>
            <person name="Berger A."/>
            <person name="Dooley C.M."/>
            <person name="Ersan-Urun Z."/>
            <person name="Eser C."/>
            <person name="Geiger H."/>
            <person name="Geisler M."/>
            <person name="Karotki L."/>
            <person name="Kirn A."/>
            <person name="Konantz J."/>
            <person name="Konantz M."/>
            <person name="Oberlander M."/>
            <person name="Rudolph-Geiger S."/>
            <person name="Teucke M."/>
            <person name="Lanz C."/>
            <person name="Raddatz G."/>
            <person name="Osoegawa K."/>
            <person name="Zhu B."/>
            <person name="Rapp A."/>
            <person name="Widaa S."/>
            <person name="Langford C."/>
            <person name="Yang F."/>
            <person name="Schuster S.C."/>
            <person name="Carter N.P."/>
            <person name="Harrow J."/>
            <person name="Ning Z."/>
            <person name="Herrero J."/>
            <person name="Searle S.M."/>
            <person name="Enright A."/>
            <person name="Geisler R."/>
            <person name="Plasterk R.H."/>
            <person name="Lee C."/>
            <person name="Westerfield M."/>
            <person name="de Jong P.J."/>
            <person name="Zon L.I."/>
            <person name="Postlethwait J.H."/>
            <person name="Nusslein-Volhard C."/>
            <person name="Hubbard T.J."/>
            <person name="Roest Crollius H."/>
            <person name="Rogers J."/>
            <person name="Stemple D.L."/>
        </authorList>
    </citation>
    <scope>NUCLEOTIDE SEQUENCE [LARGE SCALE GENOMIC DNA]</scope>
    <source>
        <strain>Tuebingen</strain>
    </source>
</reference>
<reference key="2">
    <citation type="submission" date="2003-11" db="EMBL/GenBank/DDBJ databases">
        <authorList>
            <consortium name="NIH - Zebrafish Gene Collection (ZGC) project"/>
        </authorList>
    </citation>
    <scope>NUCLEOTIDE SEQUENCE [LARGE SCALE MRNA]</scope>
</reference>
<evidence type="ECO:0000255" key="1"/>
<evidence type="ECO:0000255" key="2">
    <source>
        <dbReference type="PROSITE-ProRule" id="PRU01118"/>
    </source>
</evidence>
<evidence type="ECO:0000256" key="3">
    <source>
        <dbReference type="SAM" id="MobiDB-lite"/>
    </source>
</evidence>
<evidence type="ECO:0000305" key="4"/>
<protein>
    <recommendedName>
        <fullName>LysM and putative peptidoglycan-binding domain-containing protein 4</fullName>
    </recommendedName>
</protein>
<sequence>MRRGDPPPRAFQAPVDVHASADGQVYMFRHRQEEPEASSEDEELNVMELRPRSRDSSSKEKEGVGEMLLLERDISHEDNLSKLALQYGCKVADIKRVNNLFQEQDMYALKSIKIPVRKHGLLTEAISELRTPQQRPSHDAAPSNSAMASVSGRPQVQEYTNYLKEVDNDIERLIQNTDNVEEVFSASSRVSRGWGWRSQRLRSNGADWGIQWWNAVIAMLLIGIVLPIFYVVYYKTKDSGESAVDNVGVNISVSTSNSTREYNGKSP</sequence>
<proteinExistence type="evidence at transcript level"/>
<organism>
    <name type="scientific">Danio rerio</name>
    <name type="common">Zebrafish</name>
    <name type="synonym">Brachydanio rerio</name>
    <dbReference type="NCBI Taxonomy" id="7955"/>
    <lineage>
        <taxon>Eukaryota</taxon>
        <taxon>Metazoa</taxon>
        <taxon>Chordata</taxon>
        <taxon>Craniata</taxon>
        <taxon>Vertebrata</taxon>
        <taxon>Euteleostomi</taxon>
        <taxon>Actinopterygii</taxon>
        <taxon>Neopterygii</taxon>
        <taxon>Teleostei</taxon>
        <taxon>Ostariophysi</taxon>
        <taxon>Cypriniformes</taxon>
        <taxon>Danionidae</taxon>
        <taxon>Danioninae</taxon>
        <taxon>Danio</taxon>
    </lineage>
</organism>